<accession>Q2FEI9</accession>
<reference key="1">
    <citation type="journal article" date="2006" name="Lancet">
        <title>Complete genome sequence of USA300, an epidemic clone of community-acquired meticillin-resistant Staphylococcus aureus.</title>
        <authorList>
            <person name="Diep B.A."/>
            <person name="Gill S.R."/>
            <person name="Chang R.F."/>
            <person name="Phan T.H."/>
            <person name="Chen J.H."/>
            <person name="Davidson M.G."/>
            <person name="Lin F."/>
            <person name="Lin J."/>
            <person name="Carleton H.A."/>
            <person name="Mongodin E.F."/>
            <person name="Sensabaugh G.F."/>
            <person name="Perdreau-Remington F."/>
        </authorList>
    </citation>
    <scope>NUCLEOTIDE SEQUENCE [LARGE SCALE GENOMIC DNA]</scope>
    <source>
        <strain>USA300</strain>
    </source>
</reference>
<comment type="similarity">
    <text evidence="2">Belongs to the D-isomer specific 2-hydroxyacid dehydrogenase family.</text>
</comment>
<proteinExistence type="inferred from homology"/>
<gene>
    <name type="ordered locus">SAUSA300_2254</name>
</gene>
<protein>
    <recommendedName>
        <fullName>Putative 2-hydroxyacid dehydrogenase SAUSA300_2254</fullName>
        <ecNumber>1.1.1.-</ecNumber>
    </recommendedName>
</protein>
<name>Y2254_STAA3</name>
<keyword id="KW-0520">NAD</keyword>
<keyword id="KW-0560">Oxidoreductase</keyword>
<dbReference type="EC" id="1.1.1.-"/>
<dbReference type="EMBL" id="CP000255">
    <property type="protein sequence ID" value="ABD22593.1"/>
    <property type="molecule type" value="Genomic_DNA"/>
</dbReference>
<dbReference type="RefSeq" id="WP_000417016.1">
    <property type="nucleotide sequence ID" value="NZ_CP027476.1"/>
</dbReference>
<dbReference type="SMR" id="Q2FEI9"/>
<dbReference type="KEGG" id="saa:SAUSA300_2254"/>
<dbReference type="HOGENOM" id="CLU_019796_1_2_9"/>
<dbReference type="OMA" id="PHIAWAY"/>
<dbReference type="Proteomes" id="UP000001939">
    <property type="component" value="Chromosome"/>
</dbReference>
<dbReference type="GO" id="GO:0051287">
    <property type="term" value="F:NAD binding"/>
    <property type="evidence" value="ECO:0007669"/>
    <property type="project" value="InterPro"/>
</dbReference>
<dbReference type="GO" id="GO:0016616">
    <property type="term" value="F:oxidoreductase activity, acting on the CH-OH group of donors, NAD or NADP as acceptor"/>
    <property type="evidence" value="ECO:0007669"/>
    <property type="project" value="InterPro"/>
</dbReference>
<dbReference type="CDD" id="cd12178">
    <property type="entry name" value="2-Hacid_dh_13"/>
    <property type="match status" value="1"/>
</dbReference>
<dbReference type="FunFam" id="3.40.50.720:FF:000462">
    <property type="entry name" value="Glyoxylate reductase (NADP+)"/>
    <property type="match status" value="1"/>
</dbReference>
<dbReference type="Gene3D" id="3.40.50.720">
    <property type="entry name" value="NAD(P)-binding Rossmann-like Domain"/>
    <property type="match status" value="2"/>
</dbReference>
<dbReference type="InterPro" id="IPR050857">
    <property type="entry name" value="D-2-hydroxyacid_DH"/>
</dbReference>
<dbReference type="InterPro" id="IPR006139">
    <property type="entry name" value="D-isomer_2_OHA_DH_cat_dom"/>
</dbReference>
<dbReference type="InterPro" id="IPR006140">
    <property type="entry name" value="D-isomer_DH_NAD-bd"/>
</dbReference>
<dbReference type="InterPro" id="IPR036291">
    <property type="entry name" value="NAD(P)-bd_dom_sf"/>
</dbReference>
<dbReference type="PANTHER" id="PTHR42789">
    <property type="entry name" value="D-ISOMER SPECIFIC 2-HYDROXYACID DEHYDROGENASE FAMILY PROTEIN (AFU_ORTHOLOGUE AFUA_6G10090)"/>
    <property type="match status" value="1"/>
</dbReference>
<dbReference type="PANTHER" id="PTHR42789:SF1">
    <property type="entry name" value="D-ISOMER SPECIFIC 2-HYDROXYACID DEHYDROGENASE FAMILY PROTEIN (AFU_ORTHOLOGUE AFUA_6G10090)"/>
    <property type="match status" value="1"/>
</dbReference>
<dbReference type="Pfam" id="PF00389">
    <property type="entry name" value="2-Hacid_dh"/>
    <property type="match status" value="1"/>
</dbReference>
<dbReference type="Pfam" id="PF02826">
    <property type="entry name" value="2-Hacid_dh_C"/>
    <property type="match status" value="1"/>
</dbReference>
<dbReference type="SUPFAM" id="SSF52283">
    <property type="entry name" value="Formate/glycerate dehydrogenase catalytic domain-like"/>
    <property type="match status" value="1"/>
</dbReference>
<dbReference type="SUPFAM" id="SSF51735">
    <property type="entry name" value="NAD(P)-binding Rossmann-fold domains"/>
    <property type="match status" value="1"/>
</dbReference>
<evidence type="ECO:0000250" key="1"/>
<evidence type="ECO:0000305" key="2"/>
<sequence length="317" mass="34675">MEKVYVAGAIPEVGLKLLQEHFEVEMYEGKGLVDKDTLIKGVKNATALISLLSTNVDKDVIDAGKDLKIIANYGAGFNNIDIEYAREKSIDVTNTPKASTNATADLTIGLVLAVARRIVEGDQLSRTTGFDGWAPLFFRGREVSGKTIGIIGLGEIGSAVARRARAFDMDVLYTGPNRKEEKEREIGAKYVDLDTLLKNADFITINAAYNPKMHHLIDTEQFKMMKSTAYLINASRGPIVHEQALVQALKDNEIEGAALDVYEFEPDITDDLKSLNNVVLTPHIGNATFEARDMMSKIVANAAISAVQGEKPQFVVN</sequence>
<organism>
    <name type="scientific">Staphylococcus aureus (strain USA300)</name>
    <dbReference type="NCBI Taxonomy" id="367830"/>
    <lineage>
        <taxon>Bacteria</taxon>
        <taxon>Bacillati</taxon>
        <taxon>Bacillota</taxon>
        <taxon>Bacilli</taxon>
        <taxon>Bacillales</taxon>
        <taxon>Staphylococcaceae</taxon>
        <taxon>Staphylococcus</taxon>
    </lineage>
</organism>
<feature type="chain" id="PRO_0000312180" description="Putative 2-hydroxyacid dehydrogenase SAUSA300_2254">
    <location>
        <begin position="1"/>
        <end position="317"/>
    </location>
</feature>
<feature type="active site" evidence="1">
    <location>
        <position position="236"/>
    </location>
</feature>
<feature type="active site" evidence="1">
    <location>
        <position position="265"/>
    </location>
</feature>
<feature type="active site" description="Proton donor" evidence="1">
    <location>
        <position position="283"/>
    </location>
</feature>
<feature type="binding site" evidence="1">
    <location>
        <begin position="155"/>
        <end position="156"/>
    </location>
    <ligand>
        <name>NAD(+)</name>
        <dbReference type="ChEBI" id="CHEBI:57540"/>
    </ligand>
</feature>
<feature type="binding site" evidence="1">
    <location>
        <begin position="234"/>
        <end position="236"/>
    </location>
    <ligand>
        <name>NAD(+)</name>
        <dbReference type="ChEBI" id="CHEBI:57540"/>
    </ligand>
</feature>
<feature type="binding site" evidence="1">
    <location>
        <position position="260"/>
    </location>
    <ligand>
        <name>NAD(+)</name>
        <dbReference type="ChEBI" id="CHEBI:57540"/>
    </ligand>
</feature>
<feature type="binding site" evidence="1">
    <location>
        <begin position="283"/>
        <end position="286"/>
    </location>
    <ligand>
        <name>NAD(+)</name>
        <dbReference type="ChEBI" id="CHEBI:57540"/>
    </ligand>
</feature>